<dbReference type="EMBL" id="AP009384">
    <property type="protein sequence ID" value="BAF90712.1"/>
    <property type="molecule type" value="Genomic_DNA"/>
</dbReference>
<dbReference type="SMR" id="A8I275"/>
<dbReference type="STRING" id="438753.AZC_4714"/>
<dbReference type="KEGG" id="azc:AZC_4714"/>
<dbReference type="eggNOG" id="COG0249">
    <property type="taxonomic scope" value="Bacteria"/>
</dbReference>
<dbReference type="HOGENOM" id="CLU_002472_4_0_5"/>
<dbReference type="Proteomes" id="UP000000270">
    <property type="component" value="Chromosome"/>
</dbReference>
<dbReference type="GO" id="GO:0005829">
    <property type="term" value="C:cytosol"/>
    <property type="evidence" value="ECO:0007669"/>
    <property type="project" value="TreeGrafter"/>
</dbReference>
<dbReference type="GO" id="GO:0005524">
    <property type="term" value="F:ATP binding"/>
    <property type="evidence" value="ECO:0007669"/>
    <property type="project" value="UniProtKB-UniRule"/>
</dbReference>
<dbReference type="GO" id="GO:0140664">
    <property type="term" value="F:ATP-dependent DNA damage sensor activity"/>
    <property type="evidence" value="ECO:0007669"/>
    <property type="project" value="InterPro"/>
</dbReference>
<dbReference type="GO" id="GO:0003684">
    <property type="term" value="F:damaged DNA binding"/>
    <property type="evidence" value="ECO:0007669"/>
    <property type="project" value="UniProtKB-UniRule"/>
</dbReference>
<dbReference type="GO" id="GO:0030983">
    <property type="term" value="F:mismatched DNA binding"/>
    <property type="evidence" value="ECO:0007669"/>
    <property type="project" value="InterPro"/>
</dbReference>
<dbReference type="GO" id="GO:0006298">
    <property type="term" value="P:mismatch repair"/>
    <property type="evidence" value="ECO:0007669"/>
    <property type="project" value="UniProtKB-UniRule"/>
</dbReference>
<dbReference type="CDD" id="cd03284">
    <property type="entry name" value="ABC_MutS1"/>
    <property type="match status" value="1"/>
</dbReference>
<dbReference type="FunFam" id="3.40.1170.10:FF:000001">
    <property type="entry name" value="DNA mismatch repair protein MutS"/>
    <property type="match status" value="1"/>
</dbReference>
<dbReference type="Gene3D" id="1.10.1420.10">
    <property type="match status" value="2"/>
</dbReference>
<dbReference type="Gene3D" id="6.10.140.430">
    <property type="match status" value="1"/>
</dbReference>
<dbReference type="Gene3D" id="3.40.1170.10">
    <property type="entry name" value="DNA repair protein MutS, domain I"/>
    <property type="match status" value="1"/>
</dbReference>
<dbReference type="Gene3D" id="3.30.420.110">
    <property type="entry name" value="MutS, connector domain"/>
    <property type="match status" value="1"/>
</dbReference>
<dbReference type="Gene3D" id="3.40.50.300">
    <property type="entry name" value="P-loop containing nucleotide triphosphate hydrolases"/>
    <property type="match status" value="1"/>
</dbReference>
<dbReference type="HAMAP" id="MF_00096">
    <property type="entry name" value="MutS"/>
    <property type="match status" value="1"/>
</dbReference>
<dbReference type="InterPro" id="IPR005748">
    <property type="entry name" value="DNA_mismatch_repair_MutS"/>
</dbReference>
<dbReference type="InterPro" id="IPR007695">
    <property type="entry name" value="DNA_mismatch_repair_MutS-lik_N"/>
</dbReference>
<dbReference type="InterPro" id="IPR017261">
    <property type="entry name" value="DNA_mismatch_repair_MutS/MSH"/>
</dbReference>
<dbReference type="InterPro" id="IPR000432">
    <property type="entry name" value="DNA_mismatch_repair_MutS_C"/>
</dbReference>
<dbReference type="InterPro" id="IPR007861">
    <property type="entry name" value="DNA_mismatch_repair_MutS_clamp"/>
</dbReference>
<dbReference type="InterPro" id="IPR007696">
    <property type="entry name" value="DNA_mismatch_repair_MutS_core"/>
</dbReference>
<dbReference type="InterPro" id="IPR016151">
    <property type="entry name" value="DNA_mismatch_repair_MutS_N"/>
</dbReference>
<dbReference type="InterPro" id="IPR036187">
    <property type="entry name" value="DNA_mismatch_repair_MutS_sf"/>
</dbReference>
<dbReference type="InterPro" id="IPR007860">
    <property type="entry name" value="DNA_mmatch_repair_MutS_con_dom"/>
</dbReference>
<dbReference type="InterPro" id="IPR045076">
    <property type="entry name" value="MutS"/>
</dbReference>
<dbReference type="InterPro" id="IPR036678">
    <property type="entry name" value="MutS_con_dom_sf"/>
</dbReference>
<dbReference type="InterPro" id="IPR027417">
    <property type="entry name" value="P-loop_NTPase"/>
</dbReference>
<dbReference type="NCBIfam" id="TIGR01070">
    <property type="entry name" value="mutS1"/>
    <property type="match status" value="1"/>
</dbReference>
<dbReference type="NCBIfam" id="NF003810">
    <property type="entry name" value="PRK05399.1"/>
    <property type="match status" value="1"/>
</dbReference>
<dbReference type="PANTHER" id="PTHR11361:SF34">
    <property type="entry name" value="DNA MISMATCH REPAIR PROTEIN MSH1, MITOCHONDRIAL"/>
    <property type="match status" value="1"/>
</dbReference>
<dbReference type="PANTHER" id="PTHR11361">
    <property type="entry name" value="DNA MISMATCH REPAIR PROTEIN MUTS FAMILY MEMBER"/>
    <property type="match status" value="1"/>
</dbReference>
<dbReference type="Pfam" id="PF01624">
    <property type="entry name" value="MutS_I"/>
    <property type="match status" value="1"/>
</dbReference>
<dbReference type="Pfam" id="PF05188">
    <property type="entry name" value="MutS_II"/>
    <property type="match status" value="1"/>
</dbReference>
<dbReference type="Pfam" id="PF05192">
    <property type="entry name" value="MutS_III"/>
    <property type="match status" value="1"/>
</dbReference>
<dbReference type="Pfam" id="PF05190">
    <property type="entry name" value="MutS_IV"/>
    <property type="match status" value="1"/>
</dbReference>
<dbReference type="Pfam" id="PF00488">
    <property type="entry name" value="MutS_V"/>
    <property type="match status" value="1"/>
</dbReference>
<dbReference type="PIRSF" id="PIRSF037677">
    <property type="entry name" value="DNA_mis_repair_Msh6"/>
    <property type="match status" value="1"/>
</dbReference>
<dbReference type="SMART" id="SM00534">
    <property type="entry name" value="MUTSac"/>
    <property type="match status" value="1"/>
</dbReference>
<dbReference type="SMART" id="SM00533">
    <property type="entry name" value="MUTSd"/>
    <property type="match status" value="1"/>
</dbReference>
<dbReference type="SUPFAM" id="SSF55271">
    <property type="entry name" value="DNA repair protein MutS, domain I"/>
    <property type="match status" value="1"/>
</dbReference>
<dbReference type="SUPFAM" id="SSF53150">
    <property type="entry name" value="DNA repair protein MutS, domain II"/>
    <property type="match status" value="1"/>
</dbReference>
<dbReference type="SUPFAM" id="SSF48334">
    <property type="entry name" value="DNA repair protein MutS, domain III"/>
    <property type="match status" value="1"/>
</dbReference>
<dbReference type="SUPFAM" id="SSF52540">
    <property type="entry name" value="P-loop containing nucleoside triphosphate hydrolases"/>
    <property type="match status" value="1"/>
</dbReference>
<dbReference type="PROSITE" id="PS00486">
    <property type="entry name" value="DNA_MISMATCH_REPAIR_2"/>
    <property type="match status" value="1"/>
</dbReference>
<evidence type="ECO:0000255" key="1">
    <source>
        <dbReference type="HAMAP-Rule" id="MF_00096"/>
    </source>
</evidence>
<evidence type="ECO:0000256" key="2">
    <source>
        <dbReference type="SAM" id="MobiDB-lite"/>
    </source>
</evidence>
<accession>A8I275</accession>
<sequence length="931" mass="100416">MMDDTAMPARAEADAAEDELAAPAGIDRTAKADKDANRVSPMMAQYVEIKAANPGSLLFYRMGDFYELFFEDAEIASQALGIVLTKRGKHLGEDIPMCGVPLTRSEEYLHKLIALGHRVAVCDQLEDPAEAKKRGSKSVVKRDVIRLVTPGTITEDSLLDAKRENVLLAVARTRASGEGAYDYALAFTDVSTGSFRVVASDGDMLAADLARIDPAEILVSDAVYDDEELRDFWRGLSTPVTPLPKQSFDGPQAEKRLAAFFGVATADSFGSFARAELIAAAAVVAYIERTQLGARPALAPPQREADGGSMLIDAGTRVNLELIRTTSGERRGSLLAAIDRTVTAAGARLLARRLAEPLTDIAAIRARHDAVGFLVEETELREALRKRLAAAPDLARALSRISLGRGSPRDLGAIAAGLKEGLAISSAFGPETPRDIARCARLLAAVEPWLAEELTAALADELPLNRRDGGFVRQGYDLDLDSTRALRDESRRVVAALERRYVDETGIKSLKIRHNAVLGYFVEVTAQNADRLREAPFNATFVHRQTMAGAVRFTSVELGDLESRIASAGERALALEQTIFDRLAAAVIEASRPIREAAEALAELDVLTALARLAVDERYVRPEMTEGVDFAISGGRHPVVEQALARGGGPFVANDCDLSPPETAQDARIWLVTGPNMAGKSTFLRQNALIAVLAQAGAFVPARAARLGVVDRLFSRVGAADDLARGRSTFMVEMVETAAILNQATRRSLVILDEIGRGTSTFDGMSIAWASLEHLHEVNRCRALFATHFHELTALTQRCQRLANATVKVTEWQGDVVFLHEVIPGAADRSYGIQVAKLAGLPKMVIARAKAVLTELEAAERVSPAQRLLDELPLFAAAARPAPTLAAPTGPHPAEPVLEELDRLDPDALTPRAALDALYRLKAMLRDAADD</sequence>
<feature type="chain" id="PRO_0000335115" description="DNA mismatch repair protein MutS">
    <location>
        <begin position="1"/>
        <end position="931"/>
    </location>
</feature>
<feature type="region of interest" description="Disordered" evidence="2">
    <location>
        <begin position="1"/>
        <end position="34"/>
    </location>
</feature>
<feature type="compositionally biased region" description="Low complexity" evidence="2">
    <location>
        <begin position="1"/>
        <end position="10"/>
    </location>
</feature>
<feature type="binding site" evidence="1">
    <location>
        <begin position="674"/>
        <end position="681"/>
    </location>
    <ligand>
        <name>ATP</name>
        <dbReference type="ChEBI" id="CHEBI:30616"/>
    </ligand>
</feature>
<organism>
    <name type="scientific">Azorhizobium caulinodans (strain ATCC 43989 / DSM 5975 / JCM 20966 / LMG 6465 / NBRC 14845 / NCIMB 13405 / ORS 571)</name>
    <dbReference type="NCBI Taxonomy" id="438753"/>
    <lineage>
        <taxon>Bacteria</taxon>
        <taxon>Pseudomonadati</taxon>
        <taxon>Pseudomonadota</taxon>
        <taxon>Alphaproteobacteria</taxon>
        <taxon>Hyphomicrobiales</taxon>
        <taxon>Xanthobacteraceae</taxon>
        <taxon>Azorhizobium</taxon>
    </lineage>
</organism>
<keyword id="KW-0067">ATP-binding</keyword>
<keyword id="KW-0227">DNA damage</keyword>
<keyword id="KW-0234">DNA repair</keyword>
<keyword id="KW-0238">DNA-binding</keyword>
<keyword id="KW-0547">Nucleotide-binding</keyword>
<keyword id="KW-1185">Reference proteome</keyword>
<reference key="1">
    <citation type="submission" date="2007-04" db="EMBL/GenBank/DDBJ databases">
        <title>Complete genome sequence of the nitrogen-fixing bacterium Azorhizobium caulinodans ORS571.</title>
        <authorList>
            <person name="Lee K.B."/>
            <person name="Backer P.D."/>
            <person name="Aono T."/>
            <person name="Liu C.T."/>
            <person name="Suzuki S."/>
            <person name="Suzuki T."/>
            <person name="Kaneko T."/>
            <person name="Yamada M."/>
            <person name="Tabata S."/>
            <person name="Kupfer D.M."/>
            <person name="Najar F.Z."/>
            <person name="Wiley G.B."/>
            <person name="Roe B."/>
            <person name="Binnewies T."/>
            <person name="Ussery D."/>
            <person name="Vereecke D."/>
            <person name="Gevers D."/>
            <person name="Holsters M."/>
            <person name="Oyaizu H."/>
        </authorList>
    </citation>
    <scope>NUCLEOTIDE SEQUENCE [LARGE SCALE GENOMIC DNA]</scope>
    <source>
        <strain>ATCC 43989 / DSM 5975 / JCM 20966 / LMG 6465 / NBRC 14845 / NCIMB 13405 / ORS 571</strain>
    </source>
</reference>
<protein>
    <recommendedName>
        <fullName evidence="1">DNA mismatch repair protein MutS</fullName>
    </recommendedName>
</protein>
<comment type="function">
    <text evidence="1">This protein is involved in the repair of mismatches in DNA. It is possible that it carries out the mismatch recognition step. This protein has a weak ATPase activity.</text>
</comment>
<comment type="similarity">
    <text evidence="1">Belongs to the DNA mismatch repair MutS family.</text>
</comment>
<name>MUTS_AZOC5</name>
<proteinExistence type="inferred from homology"/>
<gene>
    <name evidence="1" type="primary">mutS</name>
    <name type="ordered locus">AZC_4714</name>
</gene>